<organism>
    <name type="scientific">Sendai virus (strain Hamamatsu)</name>
    <name type="common">SeV</name>
    <dbReference type="NCBI Taxonomy" id="302271"/>
    <lineage>
        <taxon>Viruses</taxon>
        <taxon>Riboviria</taxon>
        <taxon>Orthornavirae</taxon>
        <taxon>Negarnaviricota</taxon>
        <taxon>Haploviricotina</taxon>
        <taxon>Monjiviricetes</taxon>
        <taxon>Mononegavirales</taxon>
        <taxon>Paramyxoviridae</taxon>
        <taxon>Feraresvirinae</taxon>
        <taxon>Respirovirus</taxon>
        <taxon>Respirovirus muris</taxon>
    </lineage>
</organism>
<reference key="1">
    <citation type="journal article" date="2001" name="Virus Genes">
        <title>Conserved and non-conserved regions in the Sendai virus genome: evolution of a gene possessing overlapping reading frames.</title>
        <authorList>
            <person name="Fujii Y."/>
            <person name="Kiyotani K."/>
            <person name="Yoshida T."/>
            <person name="Sakaguchi T."/>
        </authorList>
    </citation>
    <scope>NUCLEOTIDE SEQUENCE [GENOMIC RNA]</scope>
</reference>
<reference key="2">
    <citation type="journal article" date="2002" name="J. Virol.">
        <title>Involvement of the leader sequence in Sendai virus pathogenesis revealed by recovery of a pathogenic field isolate from cDNA.</title>
        <authorList>
            <person name="Fujii Y."/>
            <person name="Sakaguchi T."/>
            <person name="Kiyotani K."/>
            <person name="Huang C."/>
            <person name="Fukuhara N."/>
            <person name="Egi Y."/>
            <person name="Yoshida T."/>
        </authorList>
    </citation>
    <scope>NUCLEOTIDE SEQUENCE [GENOMIC RNA]</scope>
    <source>
        <strain>Isolate E15cl2</strain>
    </source>
</reference>
<reference key="3">
    <citation type="journal article" date="2002" name="Virus Genes">
        <title>Identification of mutations associated with attenuation of virulence of a field Sendai virus isolate by egg passage.</title>
        <authorList>
            <person name="Fujii Y."/>
            <person name="Sakaguchi T."/>
            <person name="Kiyotani K."/>
            <person name="Huang C."/>
            <person name="Fukuhara N."/>
            <person name="Yoshida T."/>
        </authorList>
    </citation>
    <scope>NUCLEOTIDE SEQUENCE [GENOMIC RNA]</scope>
    <source>
        <strain>Isolate E15cl2</strain>
        <strain>Isolate E30cl2</strain>
        <strain>Isolate E30M15cl5</strain>
    </source>
</reference>
<reference key="4">
    <citation type="submission" date="2001-07" db="EMBL/GenBank/DDBJ databases">
        <authorList>
            <person name="Fujii Y."/>
            <person name="Kiyotani K."/>
            <person name="Huang C."/>
            <person name="Fukuhara N."/>
            <person name="Egi K."/>
            <person name="Yoshida T."/>
            <person name="Sakaguchi T."/>
        </authorList>
    </citation>
    <scope>NUCLEOTIDE SEQUENCE [GENOMIC RNA]</scope>
    <source>
        <strain>Isolate E50cl9</strain>
    </source>
</reference>
<name>L_SENDA</name>
<feature type="chain" id="PRO_0000142736" description="RNA-directed RNA polymerase L">
    <location>
        <begin position="1"/>
        <end position="2228"/>
    </location>
</feature>
<feature type="domain" description="RdRp catalytic" evidence="5">
    <location>
        <begin position="656"/>
        <end position="840"/>
    </location>
</feature>
<feature type="domain" description="Mononegavirus-type SAM-dependent 2'-O-MTase" evidence="6">
    <location>
        <begin position="1771"/>
        <end position="1978"/>
    </location>
</feature>
<feature type="region of interest" description="Oligomerization domain" evidence="1">
    <location>
        <begin position="1"/>
        <end position="174"/>
    </location>
</feature>
<feature type="region of interest" description="Disordered" evidence="7">
    <location>
        <begin position="607"/>
        <end position="633"/>
    </location>
</feature>
<feature type="region of interest" description="Involved in mRNA cap methylation" evidence="1">
    <location>
        <begin position="1756"/>
        <end position="2228"/>
    </location>
</feature>
<feature type="compositionally biased region" description="Basic and acidic residues" evidence="7">
    <location>
        <begin position="616"/>
        <end position="625"/>
    </location>
</feature>
<feature type="binding site" evidence="4">
    <location>
        <begin position="1801"/>
        <end position="1810"/>
    </location>
    <ligand>
        <name>ATP</name>
        <dbReference type="ChEBI" id="CHEBI:30616"/>
    </ligand>
</feature>
<feature type="sequence variant" description="In strain: Isolate E50cl9; egg passage attenuated.">
    <original>Q</original>
    <variation>K</variation>
    <location>
        <position position="152"/>
    </location>
</feature>
<feature type="sequence variant" description="In strain: Isolate E50cl9; egg passage attenuated.">
    <original>G</original>
    <variation>S</variation>
    <location>
        <position position="623"/>
    </location>
</feature>
<feature type="sequence variant" description="In strain: Isolate E30M15cl5; revertant of egg passage attenuated.">
    <original>K</original>
    <variation>N</variation>
    <location>
        <position position="626"/>
    </location>
</feature>
<feature type="sequence variant" description="In strain: Isolate E15cl2, Isolate E50cl9 and Isolate E30M15cl5; egg passage attenuated.">
    <original>S</original>
    <variation>C</variation>
    <location>
        <position position="1207"/>
    </location>
</feature>
<feature type="sequence variant" description="In strain: Isolate E30cl2 and Isolate E50cl9; egg passage attenuated clones.">
    <original>S</original>
    <variation>N</variation>
    <location>
        <position position="1791"/>
    </location>
</feature>
<feature type="sequence variant" description="In strain: Isolate E30M15cl5; revertant of egg passage attenuated.">
    <original>T</original>
    <variation>I</variation>
    <location>
        <position position="2024"/>
    </location>
</feature>
<proteinExistence type="inferred from homology"/>
<evidence type="ECO:0000250" key="1"/>
<evidence type="ECO:0000250" key="2">
    <source>
        <dbReference type="UniProtKB" id="P03523"/>
    </source>
</evidence>
<evidence type="ECO:0000250" key="3">
    <source>
        <dbReference type="UniProtKB" id="P28887"/>
    </source>
</evidence>
<evidence type="ECO:0000255" key="4"/>
<evidence type="ECO:0000255" key="5">
    <source>
        <dbReference type="PROSITE-ProRule" id="PRU00539"/>
    </source>
</evidence>
<evidence type="ECO:0000255" key="6">
    <source>
        <dbReference type="PROSITE-ProRule" id="PRU00923"/>
    </source>
</evidence>
<evidence type="ECO:0000256" key="7">
    <source>
        <dbReference type="SAM" id="MobiDB-lite"/>
    </source>
</evidence>
<evidence type="ECO:0000305" key="8"/>
<comment type="function">
    <text evidence="2">RNA-directed RNA polymerase that catalyzes the transcription of viral mRNAs, their capping and polyadenylation. The template is composed of the viral RNA tightly encapsidated by the nucleoprotein (N). The viral polymerase binds to the genomic RNA at the 3' leader promoter, and transcribes subsequently all viral mRNAs with a decreasing efficiency. The first gene is the most transcribed, and the last the least transcribed. The viral phosphoprotein acts as a processivity factor. Capping is concomitant with initiation of mRNA transcription. Indeed, a GDP polyribonucleotidyl transferase (PRNTase) adds the cap structure when the nascent RNA chain length has reached few nucleotides. Ribose 2'-O methylation of viral mRNA cap precedes and facilitates subsequent guanine-N-7 methylation, both activities being carried by the viral polymerase. Polyadenylation of mRNAs occur by a stuttering mechanism at a slipery stop site present at the end viral genes. After finishing transcription of a mRNA, the polymerase can resume transcription of the downstream gene.</text>
</comment>
<comment type="function">
    <text evidence="2">RNA-directed RNA polymerase that catalyzes the replication of viral genomic RNA. The template is composed of the viral RNA tightly encapsidated by the nucleoprotein (N). The replicase mode is dependent on intracellular N protein concentration. In this mode, the polymerase replicates the whole viral genome without recognizing transcriptional signals, and the replicated genome is not caped or polyadenylated.</text>
</comment>
<comment type="catalytic activity">
    <reaction evidence="5">
        <text>RNA(n) + a ribonucleoside 5'-triphosphate = RNA(n+1) + diphosphate</text>
        <dbReference type="Rhea" id="RHEA:21248"/>
        <dbReference type="Rhea" id="RHEA-COMP:14527"/>
        <dbReference type="Rhea" id="RHEA-COMP:17342"/>
        <dbReference type="ChEBI" id="CHEBI:33019"/>
        <dbReference type="ChEBI" id="CHEBI:61557"/>
        <dbReference type="ChEBI" id="CHEBI:140395"/>
        <dbReference type="EC" id="2.7.7.48"/>
    </reaction>
</comment>
<comment type="catalytic activity">
    <reaction evidence="2">
        <text>a 5'-end (5'-triphosphoguanosine)-adenylyl-adenylyl-cytidylyl-adenosine in mRNA + 2 S-adenosyl-L-methionine = a 5'-end (N(7)-methyl 5'-triphosphoguanosine)-(2'-O-methyladenylyl)-adenylyl-cytidylyl-adenosine in mRNA + 2 S-adenosyl-L-homocysteine + H(+)</text>
        <dbReference type="Rhea" id="RHEA:65376"/>
        <dbReference type="Rhea" id="RHEA-COMP:16797"/>
        <dbReference type="Rhea" id="RHEA-COMP:16798"/>
        <dbReference type="ChEBI" id="CHEBI:15378"/>
        <dbReference type="ChEBI" id="CHEBI:57856"/>
        <dbReference type="ChEBI" id="CHEBI:59789"/>
        <dbReference type="ChEBI" id="CHEBI:156483"/>
        <dbReference type="ChEBI" id="CHEBI:156484"/>
        <dbReference type="EC" id="2.1.1.375"/>
    </reaction>
</comment>
<comment type="catalytic activity">
    <reaction evidence="2">
        <text>a 5'-end (5'-triphosphoguanosine)-adenylyl-adenylyl-cytidylyl-adenosine in mRNA + S-adenosyl-L-methionine = a 5'-end (5'-triphosphoguanosine)-(2'-O-methyladenylyl)-adenylyl-cytidylyl-adenosine in mRNA + S-adenosyl-L-homocysteine + H(+)</text>
        <dbReference type="Rhea" id="RHEA:65380"/>
        <dbReference type="Rhea" id="RHEA-COMP:16797"/>
        <dbReference type="Rhea" id="RHEA-COMP:16801"/>
        <dbReference type="ChEBI" id="CHEBI:15378"/>
        <dbReference type="ChEBI" id="CHEBI:57856"/>
        <dbReference type="ChEBI" id="CHEBI:59789"/>
        <dbReference type="ChEBI" id="CHEBI:156482"/>
        <dbReference type="ChEBI" id="CHEBI:156484"/>
    </reaction>
</comment>
<comment type="catalytic activity">
    <reaction evidence="3">
        <text>a 5'-end triphospho-adenylyl-adenylyl-cytidylyl-adenosine in mRNA + GDP + H(+) = a 5'-end (5'-triphosphoguanosine)-adenylyl-adenylyl-cytidylyl-adenosine in mRNA + diphosphate</text>
        <dbReference type="Rhea" id="RHEA:65436"/>
        <dbReference type="Rhea" id="RHEA-COMP:16797"/>
        <dbReference type="Rhea" id="RHEA-COMP:16799"/>
        <dbReference type="ChEBI" id="CHEBI:15378"/>
        <dbReference type="ChEBI" id="CHEBI:33019"/>
        <dbReference type="ChEBI" id="CHEBI:58189"/>
        <dbReference type="ChEBI" id="CHEBI:156484"/>
        <dbReference type="ChEBI" id="CHEBI:156503"/>
        <dbReference type="EC" id="2.7.7.88"/>
    </reaction>
</comment>
<comment type="catalytic activity">
    <reaction evidence="2">
        <text>a 5'-end (5'-triphosphoguanosine)-(2'-O-methyladenylyl)-adenylyl-cytidylyl-adenosine in mRNA + S-adenosyl-L-methionine = a 5'-end (N(7)-methyl 5'-triphosphoguanosine)-(2'-O-methyladenylyl)-adenylyl-cytidylyl-adenosine in mRNA + S-adenosyl-L-homocysteine</text>
        <dbReference type="Rhea" id="RHEA:65440"/>
        <dbReference type="Rhea" id="RHEA-COMP:16798"/>
        <dbReference type="Rhea" id="RHEA-COMP:16801"/>
        <dbReference type="ChEBI" id="CHEBI:57856"/>
        <dbReference type="ChEBI" id="CHEBI:59789"/>
        <dbReference type="ChEBI" id="CHEBI:156482"/>
        <dbReference type="ChEBI" id="CHEBI:156483"/>
    </reaction>
</comment>
<comment type="catalytic activity">
    <reaction evidence="3">
        <text>GTP + H2O = GDP + phosphate + H(+)</text>
        <dbReference type="Rhea" id="RHEA:19669"/>
        <dbReference type="ChEBI" id="CHEBI:15377"/>
        <dbReference type="ChEBI" id="CHEBI:15378"/>
        <dbReference type="ChEBI" id="CHEBI:37565"/>
        <dbReference type="ChEBI" id="CHEBI:43474"/>
        <dbReference type="ChEBI" id="CHEBI:58189"/>
    </reaction>
</comment>
<comment type="subunit">
    <text evidence="1">Homooligomer. Interacts with the P and C proteins. The L protein complexes with P protein to form the functional polymerase. C protein binding to L has an inhibitory effect (By similarity).</text>
</comment>
<comment type="subcellular location">
    <subcellularLocation>
        <location evidence="8">Virion</location>
    </subcellularLocation>
    <subcellularLocation>
        <location evidence="1">Host cytoplasm</location>
    </subcellularLocation>
</comment>
<comment type="domain">
    <text evidence="1">The N-terminal part (about 1-400) seems to be involved in binding to the P protein.</text>
</comment>
<comment type="miscellaneous">
    <text evidence="1">Least abundant structural protein (approximately 50 copies per virion). Unstable in the absence of P protein (By similarity).</text>
</comment>
<comment type="similarity">
    <text evidence="8">Belongs to the paramyxovirus L protein family.</text>
</comment>
<organismHost>
    <name type="scientific">Cavia cutleri</name>
    <name type="common">Guinea pig</name>
    <dbReference type="NCBI Taxonomy" id="10144"/>
</organismHost>
<organismHost>
    <name type="scientific">Cricetidae sp.</name>
    <name type="common">Hamster</name>
    <dbReference type="NCBI Taxonomy" id="36483"/>
</organismHost>
<organismHost>
    <name type="scientific">Mus musculus</name>
    <name type="common">Mouse</name>
    <dbReference type="NCBI Taxonomy" id="10090"/>
</organismHost>
<organismHost>
    <name type="scientific">Rattus norvegicus</name>
    <name type="common">Rat</name>
    <dbReference type="NCBI Taxonomy" id="10116"/>
</organismHost>
<protein>
    <recommendedName>
        <fullName>RNA-directed RNA polymerase L</fullName>
        <shortName>Protein L</shortName>
    </recommendedName>
    <alternativeName>
        <fullName>Large structural protein</fullName>
    </alternativeName>
    <alternativeName>
        <fullName>Replicase</fullName>
    </alternativeName>
    <alternativeName>
        <fullName>Transcriptase</fullName>
    </alternativeName>
    <domain>
        <recommendedName>
            <fullName>RNA-directed RNA polymerase</fullName>
            <ecNumber evidence="3">2.7.7.48</ecNumber>
        </recommendedName>
    </domain>
    <domain>
        <recommendedName>
            <fullName evidence="2">GTP phosphohydrolase</fullName>
            <ecNumber evidence="2">3.6.1.-</ecNumber>
        </recommendedName>
    </domain>
    <domain>
        <recommendedName>
            <fullName evidence="8">GDP polyribonucleotidyltransferase</fullName>
            <ecNumber evidence="2">2.7.7.88</ecNumber>
        </recommendedName>
        <alternativeName>
            <fullName evidence="8">PRNTase</fullName>
        </alternativeName>
    </domain>
    <domain>
        <recommendedName>
            <fullName evidence="8">mRNA cap methyltransferase</fullName>
            <ecNumber evidence="2">2.1.1.375</ecNumber>
        </recommendedName>
        <alternativeName>
            <fullName evidence="2">mRNA (guanine-N(7)-)-methyltransferase</fullName>
            <shortName evidence="2">G-N7-MTase</shortName>
        </alternativeName>
        <alternativeName>
            <fullName evidence="2">mRNA (nucleoside-2'-O-)-methyltransferase</fullName>
            <shortName evidence="2">N1-2'-O-MTase</shortName>
        </alternativeName>
    </domain>
</protein>
<dbReference type="EC" id="2.7.7.48" evidence="3"/>
<dbReference type="EC" id="3.6.1.-" evidence="2"/>
<dbReference type="EC" id="2.7.7.88" evidence="2"/>
<dbReference type="EC" id="2.1.1.375" evidence="2"/>
<dbReference type="EMBL" id="AB039658">
    <property type="protein sequence ID" value="BAB20026.1"/>
    <property type="molecule type" value="Genomic_RNA"/>
</dbReference>
<dbReference type="EMBL" id="AB065186">
    <property type="protein sequence ID" value="BAC79132.1"/>
    <property type="molecule type" value="Genomic_RNA"/>
</dbReference>
<dbReference type="EMBL" id="AB065187">
    <property type="protein sequence ID" value="BAC07512.1"/>
    <property type="molecule type" value="Genomic_RNA"/>
</dbReference>
<dbReference type="EMBL" id="AB065188">
    <property type="protein sequence ID" value="BAC79140.1"/>
    <property type="molecule type" value="Genomic_RNA"/>
</dbReference>
<dbReference type="EMBL" id="AB065189">
    <property type="protein sequence ID" value="BAC79148.1"/>
    <property type="molecule type" value="Genomic_RNA"/>
</dbReference>
<dbReference type="SMR" id="Q9DUD8"/>
<dbReference type="Proteomes" id="UP000007191">
    <property type="component" value="Genome"/>
</dbReference>
<dbReference type="Proteomes" id="UP000008510">
    <property type="component" value="Genome"/>
</dbReference>
<dbReference type="Proteomes" id="UP000008857">
    <property type="component" value="Genome"/>
</dbReference>
<dbReference type="Proteomes" id="UP000180650">
    <property type="component" value="Genome"/>
</dbReference>
<dbReference type="Proteomes" id="UP000180718">
    <property type="component" value="Genome"/>
</dbReference>
<dbReference type="GO" id="GO:0030430">
    <property type="term" value="C:host cell cytoplasm"/>
    <property type="evidence" value="ECO:0007669"/>
    <property type="project" value="UniProtKB-SubCell"/>
</dbReference>
<dbReference type="GO" id="GO:0044423">
    <property type="term" value="C:virion component"/>
    <property type="evidence" value="ECO:0007669"/>
    <property type="project" value="UniProtKB-KW"/>
</dbReference>
<dbReference type="GO" id="GO:0005524">
    <property type="term" value="F:ATP binding"/>
    <property type="evidence" value="ECO:0007669"/>
    <property type="project" value="UniProtKB-KW"/>
</dbReference>
<dbReference type="GO" id="GO:0003924">
    <property type="term" value="F:GTPase activity"/>
    <property type="evidence" value="ECO:0007669"/>
    <property type="project" value="RHEA"/>
</dbReference>
<dbReference type="GO" id="GO:0004482">
    <property type="term" value="F:mRNA 5'-cap (guanine-N7-)-methyltransferase activity"/>
    <property type="evidence" value="ECO:0007669"/>
    <property type="project" value="InterPro"/>
</dbReference>
<dbReference type="GO" id="GO:0003968">
    <property type="term" value="F:RNA-directed RNA polymerase activity"/>
    <property type="evidence" value="ECO:0007669"/>
    <property type="project" value="UniProtKB-KW"/>
</dbReference>
<dbReference type="InterPro" id="IPR039736">
    <property type="entry name" value="L_poly_C"/>
</dbReference>
<dbReference type="InterPro" id="IPR026890">
    <property type="entry name" value="Mononeg_mRNAcap"/>
</dbReference>
<dbReference type="InterPro" id="IPR014023">
    <property type="entry name" value="Mononeg_RNA_pol_cat"/>
</dbReference>
<dbReference type="InterPro" id="IPR025786">
    <property type="entry name" value="Mononega_L_MeTrfase"/>
</dbReference>
<dbReference type="InterPro" id="IPR016269">
    <property type="entry name" value="RNA-dir_pol_paramyxovirus"/>
</dbReference>
<dbReference type="NCBIfam" id="TIGR04198">
    <property type="entry name" value="paramyx_RNAcap"/>
    <property type="match status" value="1"/>
</dbReference>
<dbReference type="Pfam" id="PF14318">
    <property type="entry name" value="Mononeg_mRNAcap"/>
    <property type="match status" value="1"/>
</dbReference>
<dbReference type="Pfam" id="PF00946">
    <property type="entry name" value="Mononeg_RNA_pol"/>
    <property type="match status" value="1"/>
</dbReference>
<dbReference type="PIRSF" id="PIRSF000830">
    <property type="entry name" value="RNA_pol_ParamyxoV"/>
    <property type="match status" value="1"/>
</dbReference>
<dbReference type="PROSITE" id="PS50526">
    <property type="entry name" value="RDRP_SSRNA_NEG_NONSEG"/>
    <property type="match status" value="1"/>
</dbReference>
<dbReference type="PROSITE" id="PS51590">
    <property type="entry name" value="SAM_MT_MNV_L"/>
    <property type="match status" value="1"/>
</dbReference>
<gene>
    <name type="primary">L</name>
</gene>
<sequence length="2228" mass="252984">MDGQESSQNPSDILYPECHLNSPIVRGKIAQLHVLLDVNQPYILKDDSIINITKHKIRNGGLSPRQIKIRSLGKALQRTIKDLDRYTFEPYPTYSQELLRLDIPEICDKIRSVFAVSDRLTKELSNGFQDLWLNIFKQLGNIEGREGYDPLQDISTIPEITERYSRNKWYRPFLTWFSIKYDMRWMQKTRPGGPLDTSNSHNLLECKSYTLVTYGDLVMILNKLTLTGYILTPELVLMYCDVVEGRWNMSAAGQLDKRSTGITSKGEELWELVDSLFSSLGEEIYNVIALLEPLSLALIQLSDPVIPLRGAFMRHVLTELQTVLTSKDVYTDPEADAIVESLLAIFHGTSIDEKAEIFSFFRTFGHPSLEAVTAADKVRAHMYAQKAIKLKTLHECHAVFCTIIINGYRERHGGQWPPCDFPDHVCLELRNAQGSNTAISYECAVDNYTSFIGFKFRKFIEPQLDEDLTIYMKDKALSPRKEAWDSVYPDSNLYYKVPESEETRRLIEVFINDENFNPEDIIDYVESGDWLKDEKFNISYSLKEKEIKQEGRLFAKMTYKMRAVQVLAETLLAKGIGELFSENGMVKGEIDLLKRLTTLSVSGVPRTDSVYNNPRSSEKRNEGMKKRNSKGYWDEKKRSRHEFKATDSSTDGYETLSCFLTTDLKKYCLNWRFESTALFGQRCNEIFGFKTFFNWMHPVLEKCTIYVGDPYCPVADRMHRQLQDHADSGIFIHNPRGGIEGYCQKLWTLISISAIHLAAVRVGVRVSAMVQGDNQAIAVTSRVPVAQTYKQKKNHVYEEITRYFGALRHVMFDIGHELKLNETIISSKMFVYSKRIYYDGKILPQCLKALTRCVFWSETLVDENRSACSNISTSIAKAIENGYSPILGYCIALYKTCQQVCISLGMTINPTISPTVRDQYFKGKNWLRCAVLIPANVGGFNYMSTSRCFVRNIGDPAVAALADLKRFIRADLLDKQVLYRVMNQEPGDSSFLDWASDPYSCNLPHSQSITTIIKNITARSVLQESPNPLLSGLFTETSGEEDLNLASFLMDRKVILPRVAHEILGNSLTGVREAIAGMLDTTKSLVRASVKRGGLSYGILRRLVNYDLLQYETLTRTLRKPVKDNIEYEYMCSVELAVGLRQKMWIHLTYGRPIHGLETPDPLELLRGTFIEGSEVCKLCRSEGADPIYTWFYLPDNIDLDTLTNGSPAIRIPYFGSATDERSEAQLGYVRNLSKPAKAAIRIAMVYTWAYGTDEISWMEAALIAQTRANLSLENLKLLTPVSTSTNLSHRLKDTATQMKFSSATLVRASRFITISNDNMALKEAGESKDTNLVYQQIMLTGLSLFEFNMRYKKGSLEKPLILHLHLNNGCCIMESPQEANIPPRSTLDLEITQENNKLIYDPDPLRDVDLELFSKVRDVVHTVDMTYWSDDEVIRATSICTAMTIADTMSQLDRDNLKEMIALVNDDDVNSLITEFMVIDVPLFCSTFGGILVNQFAYSLYGLNIRGREEIWGHVVRILKDTSHAVLKVLSNALSHPKIFKRFWNAGVVEPVYGPNLSNQDKTLLALSVCEYSVDLFMHDWQGGVPLEVFICDNDPDVADMRRSSFLARHLAYLCSLAEISRDGPRLESMNSLERLETLKSYLELTFLDDPVLRYSQLTGLVIKVFPSTLTYIRKSSIKVLRTRGIGVPEVLEDWDPEADNALLDGIAAEIQQNIPLGHQTRAPFWGLRVSKSQVLRLRGYEEITRGEVGRSGVGLTLPFDGRYLSHQLRLFGVNSTSCLKALELTYLLSPLVDKDKDRLFLGEGAGAMLSCYDATLGPCINYYNSGVYSCDVNGQRELNIYPAEVALVGKKLNNVTSLGQRVKVLFNGNPGSTWIGNDECEALIWNELQNSSIGLVHCDMEGGDHKDDQVVLHEHYSVIRIAYLVGDRDVVLISKIAPRLGTDWTRQLSLYLRYWDEVNLVVLKTSNPASTEMYLLSRHPKSDIIEDSKTVLASLHPLSKEDSIKIEKWILIEKAKAHEWVTRELREGSSSSGMLRPYHQALQTFGFEPNLYKLSRDFLSTMNIADTHNCMTAFNRVLKDTIFEWARITESDKRLKLTGKYDLYPVRDSGKLKTISRRLVLSWVSLSMSTRLVTGSFPDQKFEARLQLGIVSLSSREIRNLRVITKTILDRFENTIHSITYRFLTKEIKILMKILGAVKMFGARQNEYTTVVDDGSLDDIEPYDSL</sequence>
<keyword id="KW-0067">ATP-binding</keyword>
<keyword id="KW-1035">Host cytoplasm</keyword>
<keyword id="KW-0378">Hydrolase</keyword>
<keyword id="KW-0489">Methyltransferase</keyword>
<keyword id="KW-0506">mRNA capping</keyword>
<keyword id="KW-0507">mRNA processing</keyword>
<keyword id="KW-0511">Multifunctional enzyme</keyword>
<keyword id="KW-0547">Nucleotide-binding</keyword>
<keyword id="KW-0548">Nucleotidyltransferase</keyword>
<keyword id="KW-0696">RNA-directed RNA polymerase</keyword>
<keyword id="KW-0949">S-adenosyl-L-methionine</keyword>
<keyword id="KW-0808">Transferase</keyword>
<keyword id="KW-0693">Viral RNA replication</keyword>
<keyword id="KW-0946">Virion</keyword>
<accession>Q9DUD8</accession>
<accession>Q7TB16</accession>
<accession>Q7TB17</accession>
<accession>Q7TB19</accession>
<accession>Q8JXF8</accession>